<organism>
    <name type="scientific">Lawsonia intracellularis (strain PHE/MN1-00)</name>
    <dbReference type="NCBI Taxonomy" id="363253"/>
    <lineage>
        <taxon>Bacteria</taxon>
        <taxon>Pseudomonadati</taxon>
        <taxon>Thermodesulfobacteriota</taxon>
        <taxon>Desulfovibrionia</taxon>
        <taxon>Desulfovibrionales</taxon>
        <taxon>Desulfovibrionaceae</taxon>
        <taxon>Lawsonia</taxon>
    </lineage>
</organism>
<dbReference type="EC" id="2.7.4.22" evidence="1"/>
<dbReference type="EMBL" id="AM180252">
    <property type="protein sequence ID" value="CAJ54438.1"/>
    <property type="molecule type" value="Genomic_DNA"/>
</dbReference>
<dbReference type="RefSeq" id="WP_011526467.1">
    <property type="nucleotide sequence ID" value="NC_008011.1"/>
</dbReference>
<dbReference type="SMR" id="Q1MRD8"/>
<dbReference type="STRING" id="363253.LI0382"/>
<dbReference type="KEGG" id="lip:LI0382"/>
<dbReference type="eggNOG" id="COG0528">
    <property type="taxonomic scope" value="Bacteria"/>
</dbReference>
<dbReference type="HOGENOM" id="CLU_033861_0_0_7"/>
<dbReference type="OrthoDB" id="9807458at2"/>
<dbReference type="UniPathway" id="UPA00159">
    <property type="reaction ID" value="UER00275"/>
</dbReference>
<dbReference type="Proteomes" id="UP000002430">
    <property type="component" value="Chromosome"/>
</dbReference>
<dbReference type="GO" id="GO:0005737">
    <property type="term" value="C:cytoplasm"/>
    <property type="evidence" value="ECO:0007669"/>
    <property type="project" value="UniProtKB-SubCell"/>
</dbReference>
<dbReference type="GO" id="GO:0005524">
    <property type="term" value="F:ATP binding"/>
    <property type="evidence" value="ECO:0007669"/>
    <property type="project" value="UniProtKB-KW"/>
</dbReference>
<dbReference type="GO" id="GO:0033862">
    <property type="term" value="F:UMP kinase activity"/>
    <property type="evidence" value="ECO:0007669"/>
    <property type="project" value="UniProtKB-EC"/>
</dbReference>
<dbReference type="GO" id="GO:0044210">
    <property type="term" value="P:'de novo' CTP biosynthetic process"/>
    <property type="evidence" value="ECO:0007669"/>
    <property type="project" value="UniProtKB-UniRule"/>
</dbReference>
<dbReference type="GO" id="GO:0006225">
    <property type="term" value="P:UDP biosynthetic process"/>
    <property type="evidence" value="ECO:0007669"/>
    <property type="project" value="TreeGrafter"/>
</dbReference>
<dbReference type="CDD" id="cd04254">
    <property type="entry name" value="AAK_UMPK-PyrH-Ec"/>
    <property type="match status" value="1"/>
</dbReference>
<dbReference type="FunFam" id="3.40.1160.10:FF:000001">
    <property type="entry name" value="Uridylate kinase"/>
    <property type="match status" value="1"/>
</dbReference>
<dbReference type="Gene3D" id="3.40.1160.10">
    <property type="entry name" value="Acetylglutamate kinase-like"/>
    <property type="match status" value="1"/>
</dbReference>
<dbReference type="HAMAP" id="MF_01220_B">
    <property type="entry name" value="PyrH_B"/>
    <property type="match status" value="1"/>
</dbReference>
<dbReference type="InterPro" id="IPR036393">
    <property type="entry name" value="AceGlu_kinase-like_sf"/>
</dbReference>
<dbReference type="InterPro" id="IPR001048">
    <property type="entry name" value="Asp/Glu/Uridylate_kinase"/>
</dbReference>
<dbReference type="InterPro" id="IPR011817">
    <property type="entry name" value="Uridylate_kinase"/>
</dbReference>
<dbReference type="InterPro" id="IPR015963">
    <property type="entry name" value="Uridylate_kinase_bac"/>
</dbReference>
<dbReference type="NCBIfam" id="TIGR02075">
    <property type="entry name" value="pyrH_bact"/>
    <property type="match status" value="1"/>
</dbReference>
<dbReference type="PANTHER" id="PTHR42833">
    <property type="entry name" value="URIDYLATE KINASE"/>
    <property type="match status" value="1"/>
</dbReference>
<dbReference type="PANTHER" id="PTHR42833:SF4">
    <property type="entry name" value="URIDYLATE KINASE PUMPKIN, CHLOROPLASTIC"/>
    <property type="match status" value="1"/>
</dbReference>
<dbReference type="Pfam" id="PF00696">
    <property type="entry name" value="AA_kinase"/>
    <property type="match status" value="1"/>
</dbReference>
<dbReference type="PIRSF" id="PIRSF005650">
    <property type="entry name" value="Uridylate_kin"/>
    <property type="match status" value="1"/>
</dbReference>
<dbReference type="SUPFAM" id="SSF53633">
    <property type="entry name" value="Carbamate kinase-like"/>
    <property type="match status" value="1"/>
</dbReference>
<reference key="1">
    <citation type="submission" date="2005-11" db="EMBL/GenBank/DDBJ databases">
        <title>The complete genome sequence of Lawsonia intracellularis: the causative agent of proliferative enteropathy.</title>
        <authorList>
            <person name="Kaur K."/>
            <person name="Zhang Q."/>
            <person name="Beckler D."/>
            <person name="Munir S."/>
            <person name="Li L."/>
            <person name="Kinsley K."/>
            <person name="Herron L."/>
            <person name="Peterson A."/>
            <person name="May B."/>
            <person name="Singh S."/>
            <person name="Gebhart C."/>
            <person name="Kapur V."/>
        </authorList>
    </citation>
    <scope>NUCLEOTIDE SEQUENCE [LARGE SCALE GENOMIC DNA]</scope>
    <source>
        <strain>PHE/MN1-00</strain>
    </source>
</reference>
<sequence>MSQMTYKRVLLKLSGESLAGRQLTGIDPDTVAVLCNELSSVIELGLQIALVIGGGNIFRGLSASAKGMDRSSADYMGMLATVLNALAIQDTLEKKGHPTRVLSAIAMQEVCEPYVRRRAMRHLEKGRVIICAAGTGNPYFTTDTAAALRCMELKCDALIKATRVDGVYDKDPLKFDDAEMFKHLTYEETLRRHIKIMDSTAITLAQENNIPIIVCNMFNGSIKRAILGQNPGTTVEGE</sequence>
<name>PYRH_LAWIP</name>
<evidence type="ECO:0000255" key="1">
    <source>
        <dbReference type="HAMAP-Rule" id="MF_01220"/>
    </source>
</evidence>
<comment type="function">
    <text evidence="1">Catalyzes the reversible phosphorylation of UMP to UDP.</text>
</comment>
<comment type="catalytic activity">
    <reaction evidence="1">
        <text>UMP + ATP = UDP + ADP</text>
        <dbReference type="Rhea" id="RHEA:24400"/>
        <dbReference type="ChEBI" id="CHEBI:30616"/>
        <dbReference type="ChEBI" id="CHEBI:57865"/>
        <dbReference type="ChEBI" id="CHEBI:58223"/>
        <dbReference type="ChEBI" id="CHEBI:456216"/>
        <dbReference type="EC" id="2.7.4.22"/>
    </reaction>
</comment>
<comment type="activity regulation">
    <text evidence="1">Inhibited by UTP.</text>
</comment>
<comment type="pathway">
    <text evidence="1">Pyrimidine metabolism; CTP biosynthesis via de novo pathway; UDP from UMP (UMPK route): step 1/1.</text>
</comment>
<comment type="subunit">
    <text evidence="1">Homohexamer.</text>
</comment>
<comment type="subcellular location">
    <subcellularLocation>
        <location evidence="1">Cytoplasm</location>
    </subcellularLocation>
</comment>
<comment type="similarity">
    <text evidence="1">Belongs to the UMP kinase family.</text>
</comment>
<proteinExistence type="inferred from homology"/>
<feature type="chain" id="PRO_0000323870" description="Uridylate kinase">
    <location>
        <begin position="1"/>
        <end position="238"/>
    </location>
</feature>
<feature type="binding site" evidence="1">
    <location>
        <begin position="12"/>
        <end position="15"/>
    </location>
    <ligand>
        <name>ATP</name>
        <dbReference type="ChEBI" id="CHEBI:30616"/>
    </ligand>
</feature>
<feature type="binding site" evidence="1">
    <location>
        <position position="54"/>
    </location>
    <ligand>
        <name>UMP</name>
        <dbReference type="ChEBI" id="CHEBI:57865"/>
    </ligand>
</feature>
<feature type="binding site" evidence="1">
    <location>
        <position position="55"/>
    </location>
    <ligand>
        <name>ATP</name>
        <dbReference type="ChEBI" id="CHEBI:30616"/>
    </ligand>
</feature>
<feature type="binding site" evidence="1">
    <location>
        <position position="59"/>
    </location>
    <ligand>
        <name>ATP</name>
        <dbReference type="ChEBI" id="CHEBI:30616"/>
    </ligand>
</feature>
<feature type="binding site" evidence="1">
    <location>
        <position position="74"/>
    </location>
    <ligand>
        <name>UMP</name>
        <dbReference type="ChEBI" id="CHEBI:57865"/>
    </ligand>
</feature>
<feature type="binding site" evidence="1">
    <location>
        <begin position="135"/>
        <end position="142"/>
    </location>
    <ligand>
        <name>UMP</name>
        <dbReference type="ChEBI" id="CHEBI:57865"/>
    </ligand>
</feature>
<feature type="binding site" evidence="1">
    <location>
        <position position="162"/>
    </location>
    <ligand>
        <name>ATP</name>
        <dbReference type="ChEBI" id="CHEBI:30616"/>
    </ligand>
</feature>
<feature type="binding site" evidence="1">
    <location>
        <position position="168"/>
    </location>
    <ligand>
        <name>ATP</name>
        <dbReference type="ChEBI" id="CHEBI:30616"/>
    </ligand>
</feature>
<feature type="binding site" evidence="1">
    <location>
        <position position="171"/>
    </location>
    <ligand>
        <name>ATP</name>
        <dbReference type="ChEBI" id="CHEBI:30616"/>
    </ligand>
</feature>
<keyword id="KW-0067">ATP-binding</keyword>
<keyword id="KW-0963">Cytoplasm</keyword>
<keyword id="KW-0418">Kinase</keyword>
<keyword id="KW-0547">Nucleotide-binding</keyword>
<keyword id="KW-0665">Pyrimidine biosynthesis</keyword>
<keyword id="KW-1185">Reference proteome</keyword>
<keyword id="KW-0808">Transferase</keyword>
<accession>Q1MRD8</accession>
<protein>
    <recommendedName>
        <fullName evidence="1">Uridylate kinase</fullName>
        <shortName evidence="1">UK</shortName>
        <ecNumber evidence="1">2.7.4.22</ecNumber>
    </recommendedName>
    <alternativeName>
        <fullName evidence="1">Uridine monophosphate kinase</fullName>
        <shortName evidence="1">UMP kinase</shortName>
        <shortName evidence="1">UMPK</shortName>
    </alternativeName>
</protein>
<gene>
    <name evidence="1" type="primary">pyrH</name>
    <name type="ordered locus">LI0382</name>
</gene>